<proteinExistence type="inferred from homology"/>
<keyword id="KW-0413">Isomerase</keyword>
<keyword id="KW-1185">Reference proteome</keyword>
<keyword id="KW-0819">tRNA processing</keyword>
<sequence length="265" mass="29580">MTRIRFTAAYDGRPYLGWQSQPGGRTVQDVLERAFSGLFGTTCRIHGSGRTDAGVHALGQVFHADAPDTHRIPADKWPAALNTRLPRTIRITHAEYVPPGFHARFSATGKTYRYCISRAPILNPFDAGLAWHRPLAWSVDILEQAVHLFRGTHDFTAFAALRGNEPRPIPEGYFRRTITQTQVAQTGEHVFITFTGTGFLYKMVRLMTGAAHEAARGKITLEELARLINAPLPDDKSPFCAPPDGLTLMRVHYPEETFGDKKKIN</sequence>
<reference key="1">
    <citation type="journal article" date="2011" name="PLoS ONE">
        <title>The genome of Akkermansia muciniphila, a dedicated intestinal mucin degrader, and its use in exploring intestinal metagenomes.</title>
        <authorList>
            <person name="van Passel M.W."/>
            <person name="Kant R."/>
            <person name="Zoetendal E.G."/>
            <person name="Plugge C.M."/>
            <person name="Derrien M."/>
            <person name="Malfatti S.A."/>
            <person name="Chain P.S."/>
            <person name="Woyke T."/>
            <person name="Palva A."/>
            <person name="de Vos W.M."/>
            <person name="Smidt H."/>
        </authorList>
    </citation>
    <scope>NUCLEOTIDE SEQUENCE [LARGE SCALE GENOMIC DNA]</scope>
    <source>
        <strain>ATCC BAA-835 / DSM 22959 / JCM 33894 / BCRC 81048 / CCUG 64013 / CIP 107961 / Muc</strain>
    </source>
</reference>
<feature type="chain" id="PRO_1000097715" description="tRNA pseudouridine synthase A">
    <location>
        <begin position="1"/>
        <end position="265"/>
    </location>
</feature>
<feature type="active site" description="Nucleophile" evidence="1">
    <location>
        <position position="52"/>
    </location>
</feature>
<feature type="binding site" evidence="1">
    <location>
        <position position="112"/>
    </location>
    <ligand>
        <name>substrate</name>
    </ligand>
</feature>
<gene>
    <name evidence="1" type="primary">truA</name>
    <name type="ordered locus">Amuc_0389</name>
</gene>
<dbReference type="EC" id="5.4.99.12" evidence="1"/>
<dbReference type="EMBL" id="CP001071">
    <property type="protein sequence ID" value="ACD04228.1"/>
    <property type="molecule type" value="Genomic_DNA"/>
</dbReference>
<dbReference type="RefSeq" id="WP_012419443.1">
    <property type="nucleotide sequence ID" value="NC_010655.1"/>
</dbReference>
<dbReference type="SMR" id="B2UNB6"/>
<dbReference type="STRING" id="349741.Amuc_0389"/>
<dbReference type="PaxDb" id="349741-Amuc_0389"/>
<dbReference type="KEGG" id="amu:Amuc_0389"/>
<dbReference type="eggNOG" id="COG0101">
    <property type="taxonomic scope" value="Bacteria"/>
</dbReference>
<dbReference type="HOGENOM" id="CLU_014673_0_1_0"/>
<dbReference type="OrthoDB" id="9811823at2"/>
<dbReference type="BioCyc" id="AMUC349741:G1GBX-433-MONOMER"/>
<dbReference type="Proteomes" id="UP000001031">
    <property type="component" value="Chromosome"/>
</dbReference>
<dbReference type="GO" id="GO:0003723">
    <property type="term" value="F:RNA binding"/>
    <property type="evidence" value="ECO:0007669"/>
    <property type="project" value="InterPro"/>
</dbReference>
<dbReference type="GO" id="GO:0160147">
    <property type="term" value="F:tRNA pseudouridine(38-40) synthase activity"/>
    <property type="evidence" value="ECO:0007669"/>
    <property type="project" value="UniProtKB-EC"/>
</dbReference>
<dbReference type="GO" id="GO:0031119">
    <property type="term" value="P:tRNA pseudouridine synthesis"/>
    <property type="evidence" value="ECO:0007669"/>
    <property type="project" value="UniProtKB-UniRule"/>
</dbReference>
<dbReference type="CDD" id="cd02570">
    <property type="entry name" value="PseudoU_synth_EcTruA"/>
    <property type="match status" value="1"/>
</dbReference>
<dbReference type="FunFam" id="3.30.70.580:FF:000001">
    <property type="entry name" value="tRNA pseudouridine synthase A"/>
    <property type="match status" value="1"/>
</dbReference>
<dbReference type="Gene3D" id="3.30.70.660">
    <property type="entry name" value="Pseudouridine synthase I, catalytic domain, C-terminal subdomain"/>
    <property type="match status" value="1"/>
</dbReference>
<dbReference type="Gene3D" id="3.30.70.580">
    <property type="entry name" value="Pseudouridine synthase I, catalytic domain, N-terminal subdomain"/>
    <property type="match status" value="1"/>
</dbReference>
<dbReference type="HAMAP" id="MF_00171">
    <property type="entry name" value="TruA"/>
    <property type="match status" value="1"/>
</dbReference>
<dbReference type="InterPro" id="IPR020103">
    <property type="entry name" value="PsdUridine_synth_cat_dom_sf"/>
</dbReference>
<dbReference type="InterPro" id="IPR001406">
    <property type="entry name" value="PsdUridine_synth_TruA"/>
</dbReference>
<dbReference type="InterPro" id="IPR020097">
    <property type="entry name" value="PsdUridine_synth_TruA_a/b_dom"/>
</dbReference>
<dbReference type="InterPro" id="IPR020095">
    <property type="entry name" value="PsdUridine_synth_TruA_C"/>
</dbReference>
<dbReference type="InterPro" id="IPR020094">
    <property type="entry name" value="TruA/RsuA/RluB/E/F_N"/>
</dbReference>
<dbReference type="NCBIfam" id="TIGR00071">
    <property type="entry name" value="hisT_truA"/>
    <property type="match status" value="1"/>
</dbReference>
<dbReference type="PANTHER" id="PTHR11142">
    <property type="entry name" value="PSEUDOURIDYLATE SYNTHASE"/>
    <property type="match status" value="1"/>
</dbReference>
<dbReference type="PANTHER" id="PTHR11142:SF0">
    <property type="entry name" value="TRNA PSEUDOURIDINE SYNTHASE-LIKE 1"/>
    <property type="match status" value="1"/>
</dbReference>
<dbReference type="Pfam" id="PF01416">
    <property type="entry name" value="PseudoU_synth_1"/>
    <property type="match status" value="2"/>
</dbReference>
<dbReference type="PIRSF" id="PIRSF001430">
    <property type="entry name" value="tRNA_psdUrid_synth"/>
    <property type="match status" value="1"/>
</dbReference>
<dbReference type="SUPFAM" id="SSF55120">
    <property type="entry name" value="Pseudouridine synthase"/>
    <property type="match status" value="1"/>
</dbReference>
<organism>
    <name type="scientific">Akkermansia muciniphila (strain ATCC BAA-835 / DSM 22959 / JCM 33894 / BCRC 81048 / CCUG 64013 / CIP 107961 / Muc)</name>
    <dbReference type="NCBI Taxonomy" id="349741"/>
    <lineage>
        <taxon>Bacteria</taxon>
        <taxon>Pseudomonadati</taxon>
        <taxon>Verrucomicrobiota</taxon>
        <taxon>Verrucomicrobiia</taxon>
        <taxon>Verrucomicrobiales</taxon>
        <taxon>Akkermansiaceae</taxon>
        <taxon>Akkermansia</taxon>
    </lineage>
</organism>
<accession>B2UNB6</accession>
<protein>
    <recommendedName>
        <fullName evidence="1">tRNA pseudouridine synthase A</fullName>
        <ecNumber evidence="1">5.4.99.12</ecNumber>
    </recommendedName>
    <alternativeName>
        <fullName evidence="1">tRNA pseudouridine(38-40) synthase</fullName>
    </alternativeName>
    <alternativeName>
        <fullName evidence="1">tRNA pseudouridylate synthase I</fullName>
    </alternativeName>
    <alternativeName>
        <fullName evidence="1">tRNA-uridine isomerase I</fullName>
    </alternativeName>
</protein>
<name>TRUA_AKKM8</name>
<evidence type="ECO:0000255" key="1">
    <source>
        <dbReference type="HAMAP-Rule" id="MF_00171"/>
    </source>
</evidence>
<comment type="function">
    <text evidence="1">Formation of pseudouridine at positions 38, 39 and 40 in the anticodon stem and loop of transfer RNAs.</text>
</comment>
<comment type="catalytic activity">
    <reaction evidence="1">
        <text>uridine(38/39/40) in tRNA = pseudouridine(38/39/40) in tRNA</text>
        <dbReference type="Rhea" id="RHEA:22376"/>
        <dbReference type="Rhea" id="RHEA-COMP:10085"/>
        <dbReference type="Rhea" id="RHEA-COMP:10087"/>
        <dbReference type="ChEBI" id="CHEBI:65314"/>
        <dbReference type="ChEBI" id="CHEBI:65315"/>
        <dbReference type="EC" id="5.4.99.12"/>
    </reaction>
</comment>
<comment type="subunit">
    <text evidence="1">Homodimer.</text>
</comment>
<comment type="similarity">
    <text evidence="1">Belongs to the tRNA pseudouridine synthase TruA family.</text>
</comment>